<accession>Q5MIW3</accession>
<sequence>MNLKIAIIVICQLVYFTQGDTVPSKPLSVDYQAEFSWDLYKKLYPEFRRNMVISPYSLRKIFVCLHQLTDAKDPATTKFSKQLHKVFKFNPTGQLPDLVRRRYENQREAYAQDQGLNTTTLAVVLGRKKKTTHALNNLPKSCGIFARSLKSGSPKQMTRSLNAAMKNISNGAAQSFLSESDLNRDWDFFVADSWLFKGFWRYQFEEEYTTTCNFYTNAKKKGLMRFMYLEEMLRVGHFPQWNVRAVELPLHRESPFSCVLMMPVAADIEELIESLSHKRFKEIYDNMSASKTTVRLPQFRLRMKLSAKSMLEQLGFDTAFKESVFRVFEKDGAIPLGDAIQKMDLSMAHEGEDLAKTYVDRSLGQQFTAHQPFMFVIFDRKELVPIIVGNVVAAITPKDVGPQSDEKLCDNPPRFNGR</sequence>
<comment type="function">
    <text evidence="4 5">Anticoagulant and antithrombotic serpin-type protein inhibiting host coagulation factor Xa (F10) (PubMed:21673107). Does not inhibit host uPA/urokinase-type plasminogen activator (PLAU), kallikrein, granzyme B (GZMB), matriptase, elastase, alpha-chymotrypsin, chymase, coagulation factor XIIa (F12), coagulation factor XIa (F11), plasmin (PLG), thrombin (F2), trypsin and cathepsin G (CTSG) (PubMed:21673107). Inhibits factor Xa-induced production of pro-inflammatory cytokines, such as MCP-1/CCL2, TNF-alpha/TNF, IL-1beta/IL1B, IL6, IL8/CXCL8 and IL18, in human endothelial cells (PubMed:35738824). Inhibits factor Xa-induced up-regulation of protease-activated receptors (PARs) F2R, F2RL1 and F2RL2 in human endothelial cells (PubMed:35738824). Prevents activation of host F2RL1 via inhibition of F2RL1 cleavage by host factor Xa (PubMed:35738824). Inhibits factor Xa-induced up-regulation of adhesion molecules ICAM1 and VCAM1 in human endothelial cells (PubMed:35738824). Inhibits factor Xa-induced up-regulation of phosphorylated ERK1/2 in human endothelial cells (PubMed:35738824). Inhibits factor Xa-induced activation of transcription factor NF-kappa-B in human endothelial cells (PubMed:35738824). Reduces factor Xa-induced edema in the host (PubMed:35738824). Reduces factor Xa-induced endothelial permeability in the host (PubMed:35738824).</text>
</comment>
<comment type="subunit">
    <text evidence="4">Interacts with host coagulation factor X/F10 (activated).</text>
</comment>
<comment type="subcellular location">
    <subcellularLocation>
        <location evidence="7">Secreted</location>
    </subcellularLocation>
</comment>
<comment type="tissue specificity">
    <text evidence="5">Female salivary gland (at protein level).</text>
</comment>
<comment type="miscellaneous">
    <text evidence="4 6">Binds to heparin; binding to heparin does not affect the interaction with host coagulation factor Xa (F10) (PubMed:21673107). Instead, heparin may function as an anchor that targets FXa-directed anticoagulant to endothelial cells (PubMed:21673107). Binds to phosphatidylcholine and phosphatidylethanolamine but not to phosphatidylserine (PubMed:21673107). Heparin-binding site is also required for phospholipid binding (PubMed:21673107).</text>
</comment>
<comment type="similarity">
    <text evidence="7">Belongs to the serpin family.</text>
</comment>
<keyword id="KW-1203">Blood coagulation cascade inhibiting toxin</keyword>
<keyword id="KW-0325">Glycoprotein</keyword>
<keyword id="KW-1199">Hemostasis impairing toxin</keyword>
<keyword id="KW-0358">Heparin-binding</keyword>
<keyword id="KW-0391">Immunity</keyword>
<keyword id="KW-0446">Lipid-binding</keyword>
<keyword id="KW-0646">Protease inhibitor</keyword>
<keyword id="KW-0964">Secreted</keyword>
<keyword id="KW-0722">Serine protease inhibitor</keyword>
<keyword id="KW-0732">Signal</keyword>
<keyword id="KW-0800">Toxin</keyword>
<protein>
    <recommendedName>
        <fullName evidence="1">FXa-directed anticoagulant</fullName>
    </recommendedName>
    <alternativeName>
        <fullName evidence="6">Alboserpin</fullName>
    </alternativeName>
</protein>
<feature type="signal peptide" evidence="2">
    <location>
        <begin position="1"/>
        <end position="19"/>
    </location>
</feature>
<feature type="chain" id="PRO_5004259945" description="FXa-directed anticoagulant" evidence="2">
    <location>
        <begin position="20"/>
        <end position="418"/>
    </location>
</feature>
<feature type="glycosylation site" description="N-linked (GlcNAc...) asparagine" evidence="3">
    <location>
        <position position="117"/>
    </location>
</feature>
<feature type="glycosylation site" description="N-linked (GlcNAc...) asparagine" evidence="3">
    <location>
        <position position="167"/>
    </location>
</feature>
<feature type="glycosylation site" description="N-linked (GlcNAc...) asparagine" evidence="3">
    <location>
        <position position="286"/>
    </location>
</feature>
<dbReference type="EMBL" id="AY826097">
    <property type="protein sequence ID" value="AAV90669.1"/>
    <property type="molecule type" value="mRNA"/>
</dbReference>
<dbReference type="SMR" id="Q5MIW3"/>
<dbReference type="MEROPS" id="I04.090"/>
<dbReference type="VEuPathDB" id="VectorBase:AALC636_028356"/>
<dbReference type="VEuPathDB" id="VectorBase:AALF023147"/>
<dbReference type="VEuPathDB" id="VectorBase:AALFPA_053952"/>
<dbReference type="Proteomes" id="UP000069940">
    <property type="component" value="Unplaced"/>
</dbReference>
<dbReference type="GO" id="GO:0005615">
    <property type="term" value="C:extracellular space"/>
    <property type="evidence" value="ECO:0007669"/>
    <property type="project" value="InterPro"/>
</dbReference>
<dbReference type="GO" id="GO:0008201">
    <property type="term" value="F:heparin binding"/>
    <property type="evidence" value="ECO:0007669"/>
    <property type="project" value="UniProtKB-KW"/>
</dbReference>
<dbReference type="GO" id="GO:0008289">
    <property type="term" value="F:lipid binding"/>
    <property type="evidence" value="ECO:0007669"/>
    <property type="project" value="UniProtKB-KW"/>
</dbReference>
<dbReference type="GO" id="GO:0004867">
    <property type="term" value="F:serine-type endopeptidase inhibitor activity"/>
    <property type="evidence" value="ECO:0007669"/>
    <property type="project" value="UniProtKB-KW"/>
</dbReference>
<dbReference type="GO" id="GO:0090729">
    <property type="term" value="F:toxin activity"/>
    <property type="evidence" value="ECO:0007669"/>
    <property type="project" value="UniProtKB-KW"/>
</dbReference>
<dbReference type="GO" id="GO:0002376">
    <property type="term" value="P:immune system process"/>
    <property type="evidence" value="ECO:0007669"/>
    <property type="project" value="UniProtKB-KW"/>
</dbReference>
<dbReference type="CDD" id="cd00172">
    <property type="entry name" value="serpin"/>
    <property type="match status" value="1"/>
</dbReference>
<dbReference type="Gene3D" id="2.30.39.10">
    <property type="entry name" value="Alpha-1-antitrypsin, domain 1"/>
    <property type="match status" value="1"/>
</dbReference>
<dbReference type="Gene3D" id="3.30.497.10">
    <property type="entry name" value="Antithrombin, subunit I, domain 2"/>
    <property type="match status" value="1"/>
</dbReference>
<dbReference type="InterPro" id="IPR023796">
    <property type="entry name" value="Serpin_dom"/>
</dbReference>
<dbReference type="InterPro" id="IPR000215">
    <property type="entry name" value="Serpin_fam"/>
</dbReference>
<dbReference type="InterPro" id="IPR036186">
    <property type="entry name" value="Serpin_sf"/>
</dbReference>
<dbReference type="InterPro" id="IPR042178">
    <property type="entry name" value="Serpin_sf_1"/>
</dbReference>
<dbReference type="InterPro" id="IPR042185">
    <property type="entry name" value="Serpin_sf_2"/>
</dbReference>
<dbReference type="PANTHER" id="PTHR11461:SF211">
    <property type="entry name" value="GH10112P-RELATED"/>
    <property type="match status" value="1"/>
</dbReference>
<dbReference type="PANTHER" id="PTHR11461">
    <property type="entry name" value="SERINE PROTEASE INHIBITOR, SERPIN"/>
    <property type="match status" value="1"/>
</dbReference>
<dbReference type="Pfam" id="PF00079">
    <property type="entry name" value="Serpin"/>
    <property type="match status" value="1"/>
</dbReference>
<dbReference type="SMART" id="SM00093">
    <property type="entry name" value="SERPIN"/>
    <property type="match status" value="1"/>
</dbReference>
<dbReference type="SUPFAM" id="SSF56574">
    <property type="entry name" value="Serpins"/>
    <property type="match status" value="1"/>
</dbReference>
<reference evidence="8" key="1">
    <citation type="journal article" date="2007" name="Insect Biochem. Mol. Biol.">
        <title>An insight into the sialome of the adult female mosquito Aedes albopictus.</title>
        <authorList>
            <person name="Arca B."/>
            <person name="Lombardo F."/>
            <person name="Francischetti I.M."/>
            <person name="Pham V.M."/>
            <person name="Mestres-Simon M."/>
            <person name="Andersen J.F."/>
            <person name="Ribeiro J.M."/>
        </authorList>
    </citation>
    <scope>NUCLEOTIDE SEQUENCE [LARGE SCALE MRNA]</scope>
    <source>
        <tissue evidence="8">Salivary gland</tissue>
    </source>
</reference>
<reference evidence="7" key="2">
    <citation type="journal article" date="2011" name="J. Biol. Chem.">
        <title>Alboserpin, a factor Xa inhibitor from the mosquito vector of yellow fever, binds heparin and membrane phospholipids and exhibits antithrombotic activity.</title>
        <authorList>
            <person name="Calvo E."/>
            <person name="Mizurini D.M."/>
            <person name="Sa-Nunes A."/>
            <person name="Ribeiro J.M."/>
            <person name="Andersen J.F."/>
            <person name="Mans B.J."/>
            <person name="Monteiro R.Q."/>
            <person name="Kotsyfakis M."/>
            <person name="Francischetti I.M."/>
        </authorList>
    </citation>
    <scope>FUNCTION</scope>
    <scope>INTERACTION WITH HOST F10</scope>
</reference>
<reference evidence="7" key="3">
    <citation type="journal article" date="2022" name="Immunohorizons">
        <title>Alboserpin, the Main Salivary Anticoagulant from the Disease Vector Aedes albopictus, Displays Anti-FXa-PAR Signaling In Vitro and In Vivo.</title>
        <authorList>
            <person name="Shrivastava G."/>
            <person name="Valenzuela-Leon P.C."/>
            <person name="Chagas A.C."/>
            <person name="Kern O."/>
            <person name="Botello K."/>
            <person name="Zhang Y."/>
            <person name="Martin-Martin I."/>
            <person name="Oliveira M.B."/>
            <person name="Tirloni L."/>
            <person name="Calvo E."/>
        </authorList>
    </citation>
    <scope>FUNCTION</scope>
    <scope>TISSUE SPECIFICITY</scope>
</reference>
<evidence type="ECO:0000250" key="1">
    <source>
        <dbReference type="UniProtKB" id="A0A1S4FGH1"/>
    </source>
</evidence>
<evidence type="ECO:0000255" key="2"/>
<evidence type="ECO:0000255" key="3">
    <source>
        <dbReference type="PROSITE-ProRule" id="PRU00498"/>
    </source>
</evidence>
<evidence type="ECO:0000269" key="4">
    <source>
    </source>
</evidence>
<evidence type="ECO:0000269" key="5">
    <source>
    </source>
</evidence>
<evidence type="ECO:0000303" key="6">
    <source>
    </source>
</evidence>
<evidence type="ECO:0000305" key="7"/>
<evidence type="ECO:0000312" key="8">
    <source>
        <dbReference type="EMBL" id="AAV90669.1"/>
    </source>
</evidence>
<organism evidence="8">
    <name type="scientific">Aedes albopictus</name>
    <name type="common">Asian tiger mosquito</name>
    <name type="synonym">Stegomyia albopicta</name>
    <dbReference type="NCBI Taxonomy" id="7160"/>
    <lineage>
        <taxon>Eukaryota</taxon>
        <taxon>Metazoa</taxon>
        <taxon>Ecdysozoa</taxon>
        <taxon>Arthropoda</taxon>
        <taxon>Hexapoda</taxon>
        <taxon>Insecta</taxon>
        <taxon>Pterygota</taxon>
        <taxon>Neoptera</taxon>
        <taxon>Endopterygota</taxon>
        <taxon>Diptera</taxon>
        <taxon>Nematocera</taxon>
        <taxon>Culicoidea</taxon>
        <taxon>Culicidae</taxon>
        <taxon>Culicinae</taxon>
        <taxon>Aedini</taxon>
        <taxon>Aedes</taxon>
        <taxon>Stegomyia</taxon>
    </lineage>
</organism>
<name>FXDIR_AEDAL</name>
<proteinExistence type="evidence at protein level"/>